<keyword id="KW-0217">Developmental protein</keyword>
<keyword id="KW-0221">Differentiation</keyword>
<keyword id="KW-0539">Nucleus</keyword>
<keyword id="KW-0597">Phosphoprotein</keyword>
<keyword id="KW-1185">Reference proteome</keyword>
<dbReference type="EMBL" id="AF269248">
    <property type="protein sequence ID" value="AAG33367.1"/>
    <property type="molecule type" value="mRNA"/>
</dbReference>
<dbReference type="EMBL" id="AY699986">
    <property type="protein sequence ID" value="AAT94243.1"/>
    <property type="molecule type" value="mRNA"/>
</dbReference>
<dbReference type="EMBL" id="AK006588">
    <property type="protein sequence ID" value="BAC25148.2"/>
    <property type="molecule type" value="mRNA"/>
</dbReference>
<dbReference type="EMBL" id="AK077692">
    <property type="protein sequence ID" value="BAC36959.1"/>
    <property type="molecule type" value="mRNA"/>
</dbReference>
<dbReference type="EMBL" id="AK156536">
    <property type="protein sequence ID" value="BAE33747.1"/>
    <property type="molecule type" value="mRNA"/>
</dbReference>
<dbReference type="EMBL" id="AK171890">
    <property type="protein sequence ID" value="BAE42722.1"/>
    <property type="molecule type" value="mRNA"/>
</dbReference>
<dbReference type="EMBL" id="AL683884">
    <property type="status" value="NOT_ANNOTATED_CDS"/>
    <property type="molecule type" value="Genomic_DNA"/>
</dbReference>
<dbReference type="EMBL" id="BC050798">
    <property type="protein sequence ID" value="AAH50798.1"/>
    <property type="molecule type" value="mRNA"/>
</dbReference>
<dbReference type="CCDS" id="CCDS18150.1"/>
<dbReference type="RefSeq" id="NP_444379.1">
    <property type="nucleotide sequence ID" value="NM_053149.2"/>
</dbReference>
<dbReference type="BioGRID" id="220414">
    <property type="interactions" value="3"/>
</dbReference>
<dbReference type="FunCoup" id="Q9ERZ0">
    <property type="interactions" value="50"/>
</dbReference>
<dbReference type="STRING" id="10090.ENSMUSP00000103393"/>
<dbReference type="GlyGen" id="Q9ERZ0">
    <property type="glycosylation" value="1 site"/>
</dbReference>
<dbReference type="iPTMnet" id="Q9ERZ0"/>
<dbReference type="PhosphoSitePlus" id="Q9ERZ0"/>
<dbReference type="SwissPalm" id="Q9ERZ0"/>
<dbReference type="jPOST" id="Q9ERZ0"/>
<dbReference type="PaxDb" id="10090-ENSMUSP00000103393"/>
<dbReference type="PeptideAtlas" id="Q9ERZ0"/>
<dbReference type="ProteomicsDB" id="269824"/>
<dbReference type="Antibodypedia" id="14425">
    <property type="antibodies" value="204 antibodies from 24 providers"/>
</dbReference>
<dbReference type="DNASU" id="93966"/>
<dbReference type="Ensembl" id="ENSMUST00000071096.3">
    <property type="protein sequence ID" value="ENSMUSP00000066383.3"/>
    <property type="gene ID" value="ENSMUSG00000028332.14"/>
</dbReference>
<dbReference type="Ensembl" id="ENSMUST00000107764.9">
    <property type="protein sequence ID" value="ENSMUSP00000103393.3"/>
    <property type="gene ID" value="ENSMUSG00000028332.14"/>
</dbReference>
<dbReference type="GeneID" id="93966"/>
<dbReference type="KEGG" id="mmu:93966"/>
<dbReference type="UCSC" id="uc008str.1">
    <property type="organism name" value="mouse"/>
</dbReference>
<dbReference type="AGR" id="MGI:2136910"/>
<dbReference type="CTD" id="55363"/>
<dbReference type="MGI" id="MGI:2136910">
    <property type="gene designation" value="Hemgn"/>
</dbReference>
<dbReference type="VEuPathDB" id="HostDB:ENSMUSG00000028332"/>
<dbReference type="eggNOG" id="ENOG502SBFR">
    <property type="taxonomic scope" value="Eukaryota"/>
</dbReference>
<dbReference type="GeneTree" id="ENSGT00390000004522"/>
<dbReference type="HOGENOM" id="CLU_569802_0_0_1"/>
<dbReference type="InParanoid" id="Q9ERZ0"/>
<dbReference type="OMA" id="MCQEIAV"/>
<dbReference type="OrthoDB" id="9950769at2759"/>
<dbReference type="PhylomeDB" id="Q9ERZ0"/>
<dbReference type="TreeFam" id="TF338654"/>
<dbReference type="BioGRID-ORCS" id="93966">
    <property type="hits" value="2 hits in 78 CRISPR screens"/>
</dbReference>
<dbReference type="PRO" id="PR:Q9ERZ0"/>
<dbReference type="Proteomes" id="UP000000589">
    <property type="component" value="Chromosome 4"/>
</dbReference>
<dbReference type="RNAct" id="Q9ERZ0">
    <property type="molecule type" value="protein"/>
</dbReference>
<dbReference type="Bgee" id="ENSMUSG00000028332">
    <property type="expression patterns" value="Expressed in fetal liver hematopoietic progenitor cell and 85 other cell types or tissues"/>
</dbReference>
<dbReference type="GO" id="GO:0005654">
    <property type="term" value="C:nucleoplasm"/>
    <property type="evidence" value="ECO:0000314"/>
    <property type="project" value="MGI"/>
</dbReference>
<dbReference type="GO" id="GO:0030154">
    <property type="term" value="P:cell differentiation"/>
    <property type="evidence" value="ECO:0007669"/>
    <property type="project" value="UniProtKB-KW"/>
</dbReference>
<dbReference type="InterPro" id="IPR033272">
    <property type="entry name" value="Hemogen"/>
</dbReference>
<dbReference type="PANTHER" id="PTHR15993">
    <property type="entry name" value="HEMOGEN"/>
    <property type="match status" value="1"/>
</dbReference>
<dbReference type="PANTHER" id="PTHR15993:SF6">
    <property type="entry name" value="HEMOGEN"/>
    <property type="match status" value="1"/>
</dbReference>
<comment type="function">
    <text evidence="1">Regulates the proliferation and differentiation of hematopoietic cells. Overexpression block the TPA-induced megakaryocytic differentiation in the K562 cell model. May also prevent cell apoptosis through the activation of the nuclear factor-kappa B (NF-kB) (By similarity).</text>
</comment>
<comment type="subcellular location">
    <subcellularLocation>
        <location evidence="5">Nucleus</location>
    </subcellularLocation>
</comment>
<comment type="tissue specificity">
    <text evidence="5 6">Expressed in hematopoietic precursor cells. Highly expressed in bone marrow, the red pulp of the spleen and round spermatids. Weakly expressed in peripheral blood cells.</text>
</comment>
<comment type="developmental stage">
    <text evidence="5 6">Expressed at 8.5 dpc in the blood islands of the yolk sac and in the circulating primitive blood cells. Expressed in the circulating blood cells at 9.5 dpc and 10.5 dpc. Detected in the developing hepatic primordia at 10.5 dpc. From 11.5 dpc to 14.5 dpc, exclusively expressed in the fetal liver.</text>
</comment>
<name>HEMGN_MOUSE</name>
<feature type="chain" id="PRO_0000245362" description="Hemogen">
    <location>
        <begin position="1"/>
        <end position="503"/>
    </location>
</feature>
<feature type="region of interest" description="Disordered" evidence="4">
    <location>
        <begin position="1"/>
        <end position="129"/>
    </location>
</feature>
<feature type="region of interest" description="Necessary for nuclear localization" evidence="1">
    <location>
        <begin position="7"/>
        <end position="87"/>
    </location>
</feature>
<feature type="region of interest" description="Disordered" evidence="4">
    <location>
        <begin position="381"/>
        <end position="503"/>
    </location>
</feature>
<feature type="compositionally biased region" description="Basic residues" evidence="4">
    <location>
        <begin position="1"/>
        <end position="10"/>
    </location>
</feature>
<feature type="compositionally biased region" description="Basic residues" evidence="4">
    <location>
        <begin position="61"/>
        <end position="79"/>
    </location>
</feature>
<feature type="compositionally biased region" description="Low complexity" evidence="4">
    <location>
        <begin position="385"/>
        <end position="396"/>
    </location>
</feature>
<feature type="compositionally biased region" description="Basic and acidic residues" evidence="4">
    <location>
        <begin position="426"/>
        <end position="436"/>
    </location>
</feature>
<feature type="modified residue" description="Phosphoserine" evidence="2">
    <location>
        <position position="90"/>
    </location>
</feature>
<feature type="modified residue" description="Phosphoserine" evidence="8">
    <location>
        <position position="103"/>
    </location>
</feature>
<feature type="modified residue" description="Phosphoserine" evidence="3">
    <location>
        <position position="124"/>
    </location>
</feature>
<feature type="modified residue" description="Phosphoserine" evidence="8">
    <location>
        <position position="153"/>
    </location>
</feature>
<feature type="modified residue" description="Phosphoserine" evidence="8">
    <location>
        <position position="158"/>
    </location>
</feature>
<feature type="modified residue" description="Phosphoserine" evidence="8">
    <location>
        <position position="171"/>
    </location>
</feature>
<feature type="modified residue" description="Phosphoserine" evidence="8">
    <location>
        <position position="213"/>
    </location>
</feature>
<feature type="modified residue" description="Phosphoserine" evidence="8">
    <location>
        <position position="223"/>
    </location>
</feature>
<feature type="modified residue" description="Phosphoserine" evidence="3">
    <location>
        <position position="228"/>
    </location>
</feature>
<feature type="modified residue" description="Phosphoserine" evidence="8">
    <location>
        <position position="241"/>
    </location>
</feature>
<feature type="modified residue" description="Phosphoserine" evidence="8">
    <location>
        <position position="269"/>
    </location>
</feature>
<feature type="modified residue" description="Phosphothreonine" evidence="8">
    <location>
        <position position="286"/>
    </location>
</feature>
<feature type="modified residue" description="Phosphoserine" evidence="8">
    <location>
        <position position="387"/>
    </location>
</feature>
<feature type="modified residue" description="Phosphoserine" evidence="2">
    <location>
        <position position="394"/>
    </location>
</feature>
<feature type="sequence conflict" description="In Ref. 5; AAH50798." evidence="7" ref="5">
    <original>E</original>
    <variation>G</variation>
    <location>
        <position position="472"/>
    </location>
</feature>
<accession>Q9ERZ0</accession>
<accession>B1AVH8</accession>
<accession>Q3TAE6</accession>
<accession>Q80YT2</accession>
<accession>Q8CF29</accession>
<proteinExistence type="evidence at protein level"/>
<reference key="1">
    <citation type="journal article" date="2001" name="Mech. Dev.">
        <title>Hemogen is a novel nuclear factor specifically expressed in mouse hematopoietic development and its human homologue EDAG maps to chromosome 9q22, a region containing breakpoints of hematological neoplasms.</title>
        <authorList>
            <person name="Yang L.V."/>
            <person name="Nicholson R.H."/>
            <person name="Kaplan J."/>
            <person name="Galy A."/>
            <person name="Li L."/>
        </authorList>
    </citation>
    <scope>NUCLEOTIDE SEQUENCE [MRNA]</scope>
    <scope>SUBCELLULAR LOCATION</scope>
    <scope>DEVELOPMENTAL STAGE</scope>
    <scope>TISSUE SPECIFICITY</scope>
    <source>
        <tissue>Fetal heart</tissue>
    </source>
</reference>
<reference key="2">
    <citation type="submission" date="2004-07" db="EMBL/GenBank/DDBJ databases">
        <title>Effects of mNDR in spermatogenesis.</title>
        <authorList>
            <person name="Liu C.-C."/>
            <person name="Ch'ang L.-Y."/>
        </authorList>
    </citation>
    <scope>NUCLEOTIDE SEQUENCE [MRNA]</scope>
</reference>
<reference key="3">
    <citation type="journal article" date="2005" name="Science">
        <title>The transcriptional landscape of the mammalian genome.</title>
        <authorList>
            <person name="Carninci P."/>
            <person name="Kasukawa T."/>
            <person name="Katayama S."/>
            <person name="Gough J."/>
            <person name="Frith M.C."/>
            <person name="Maeda N."/>
            <person name="Oyama R."/>
            <person name="Ravasi T."/>
            <person name="Lenhard B."/>
            <person name="Wells C."/>
            <person name="Kodzius R."/>
            <person name="Shimokawa K."/>
            <person name="Bajic V.B."/>
            <person name="Brenner S.E."/>
            <person name="Batalov S."/>
            <person name="Forrest A.R."/>
            <person name="Zavolan M."/>
            <person name="Davis M.J."/>
            <person name="Wilming L.G."/>
            <person name="Aidinis V."/>
            <person name="Allen J.E."/>
            <person name="Ambesi-Impiombato A."/>
            <person name="Apweiler R."/>
            <person name="Aturaliya R.N."/>
            <person name="Bailey T.L."/>
            <person name="Bansal M."/>
            <person name="Baxter L."/>
            <person name="Beisel K.W."/>
            <person name="Bersano T."/>
            <person name="Bono H."/>
            <person name="Chalk A.M."/>
            <person name="Chiu K.P."/>
            <person name="Choudhary V."/>
            <person name="Christoffels A."/>
            <person name="Clutterbuck D.R."/>
            <person name="Crowe M.L."/>
            <person name="Dalla E."/>
            <person name="Dalrymple B.P."/>
            <person name="de Bono B."/>
            <person name="Della Gatta G."/>
            <person name="di Bernardo D."/>
            <person name="Down T."/>
            <person name="Engstrom P."/>
            <person name="Fagiolini M."/>
            <person name="Faulkner G."/>
            <person name="Fletcher C.F."/>
            <person name="Fukushima T."/>
            <person name="Furuno M."/>
            <person name="Futaki S."/>
            <person name="Gariboldi M."/>
            <person name="Georgii-Hemming P."/>
            <person name="Gingeras T.R."/>
            <person name="Gojobori T."/>
            <person name="Green R.E."/>
            <person name="Gustincich S."/>
            <person name="Harbers M."/>
            <person name="Hayashi Y."/>
            <person name="Hensch T.K."/>
            <person name="Hirokawa N."/>
            <person name="Hill D."/>
            <person name="Huminiecki L."/>
            <person name="Iacono M."/>
            <person name="Ikeo K."/>
            <person name="Iwama A."/>
            <person name="Ishikawa T."/>
            <person name="Jakt M."/>
            <person name="Kanapin A."/>
            <person name="Katoh M."/>
            <person name="Kawasawa Y."/>
            <person name="Kelso J."/>
            <person name="Kitamura H."/>
            <person name="Kitano H."/>
            <person name="Kollias G."/>
            <person name="Krishnan S.P."/>
            <person name="Kruger A."/>
            <person name="Kummerfeld S.K."/>
            <person name="Kurochkin I.V."/>
            <person name="Lareau L.F."/>
            <person name="Lazarevic D."/>
            <person name="Lipovich L."/>
            <person name="Liu J."/>
            <person name="Liuni S."/>
            <person name="McWilliam S."/>
            <person name="Madan Babu M."/>
            <person name="Madera M."/>
            <person name="Marchionni L."/>
            <person name="Matsuda H."/>
            <person name="Matsuzawa S."/>
            <person name="Miki H."/>
            <person name="Mignone F."/>
            <person name="Miyake S."/>
            <person name="Morris K."/>
            <person name="Mottagui-Tabar S."/>
            <person name="Mulder N."/>
            <person name="Nakano N."/>
            <person name="Nakauchi H."/>
            <person name="Ng P."/>
            <person name="Nilsson R."/>
            <person name="Nishiguchi S."/>
            <person name="Nishikawa S."/>
            <person name="Nori F."/>
            <person name="Ohara O."/>
            <person name="Okazaki Y."/>
            <person name="Orlando V."/>
            <person name="Pang K.C."/>
            <person name="Pavan W.J."/>
            <person name="Pavesi G."/>
            <person name="Pesole G."/>
            <person name="Petrovsky N."/>
            <person name="Piazza S."/>
            <person name="Reed J."/>
            <person name="Reid J.F."/>
            <person name="Ring B.Z."/>
            <person name="Ringwald M."/>
            <person name="Rost B."/>
            <person name="Ruan Y."/>
            <person name="Salzberg S.L."/>
            <person name="Sandelin A."/>
            <person name="Schneider C."/>
            <person name="Schoenbach C."/>
            <person name="Sekiguchi K."/>
            <person name="Semple C.A."/>
            <person name="Seno S."/>
            <person name="Sessa L."/>
            <person name="Sheng Y."/>
            <person name="Shibata Y."/>
            <person name="Shimada H."/>
            <person name="Shimada K."/>
            <person name="Silva D."/>
            <person name="Sinclair B."/>
            <person name="Sperling S."/>
            <person name="Stupka E."/>
            <person name="Sugiura K."/>
            <person name="Sultana R."/>
            <person name="Takenaka Y."/>
            <person name="Taki K."/>
            <person name="Tammoja K."/>
            <person name="Tan S.L."/>
            <person name="Tang S."/>
            <person name="Taylor M.S."/>
            <person name="Tegner J."/>
            <person name="Teichmann S.A."/>
            <person name="Ueda H.R."/>
            <person name="van Nimwegen E."/>
            <person name="Verardo R."/>
            <person name="Wei C.L."/>
            <person name="Yagi K."/>
            <person name="Yamanishi H."/>
            <person name="Zabarovsky E."/>
            <person name="Zhu S."/>
            <person name="Zimmer A."/>
            <person name="Hide W."/>
            <person name="Bult C."/>
            <person name="Grimmond S.M."/>
            <person name="Teasdale R.D."/>
            <person name="Liu E.T."/>
            <person name="Brusic V."/>
            <person name="Quackenbush J."/>
            <person name="Wahlestedt C."/>
            <person name="Mattick J.S."/>
            <person name="Hume D.A."/>
            <person name="Kai C."/>
            <person name="Sasaki D."/>
            <person name="Tomaru Y."/>
            <person name="Fukuda S."/>
            <person name="Kanamori-Katayama M."/>
            <person name="Suzuki M."/>
            <person name="Aoki J."/>
            <person name="Arakawa T."/>
            <person name="Iida J."/>
            <person name="Imamura K."/>
            <person name="Itoh M."/>
            <person name="Kato T."/>
            <person name="Kawaji H."/>
            <person name="Kawagashira N."/>
            <person name="Kawashima T."/>
            <person name="Kojima M."/>
            <person name="Kondo S."/>
            <person name="Konno H."/>
            <person name="Nakano K."/>
            <person name="Ninomiya N."/>
            <person name="Nishio T."/>
            <person name="Okada M."/>
            <person name="Plessy C."/>
            <person name="Shibata K."/>
            <person name="Shiraki T."/>
            <person name="Suzuki S."/>
            <person name="Tagami M."/>
            <person name="Waki K."/>
            <person name="Watahiki A."/>
            <person name="Okamura-Oho Y."/>
            <person name="Suzuki H."/>
            <person name="Kawai J."/>
            <person name="Hayashizaki Y."/>
        </authorList>
    </citation>
    <scope>NUCLEOTIDE SEQUENCE [LARGE SCALE MRNA]</scope>
    <source>
        <strain>C57BL/6J</strain>
        <strain>NOD</strain>
        <tissue>Embryo</tissue>
        <tissue>Spleen</tissue>
        <tissue>Testis</tissue>
    </source>
</reference>
<reference key="4">
    <citation type="journal article" date="2009" name="PLoS Biol.">
        <title>Lineage-specific biology revealed by a finished genome assembly of the mouse.</title>
        <authorList>
            <person name="Church D.M."/>
            <person name="Goodstadt L."/>
            <person name="Hillier L.W."/>
            <person name="Zody M.C."/>
            <person name="Goldstein S."/>
            <person name="She X."/>
            <person name="Bult C.J."/>
            <person name="Agarwala R."/>
            <person name="Cherry J.L."/>
            <person name="DiCuccio M."/>
            <person name="Hlavina W."/>
            <person name="Kapustin Y."/>
            <person name="Meric P."/>
            <person name="Maglott D."/>
            <person name="Birtle Z."/>
            <person name="Marques A.C."/>
            <person name="Graves T."/>
            <person name="Zhou S."/>
            <person name="Teague B."/>
            <person name="Potamousis K."/>
            <person name="Churas C."/>
            <person name="Place M."/>
            <person name="Herschleb J."/>
            <person name="Runnheim R."/>
            <person name="Forrest D."/>
            <person name="Amos-Landgraf J."/>
            <person name="Schwartz D.C."/>
            <person name="Cheng Z."/>
            <person name="Lindblad-Toh K."/>
            <person name="Eichler E.E."/>
            <person name="Ponting C.P."/>
        </authorList>
    </citation>
    <scope>NUCLEOTIDE SEQUENCE [LARGE SCALE GENOMIC DNA]</scope>
    <source>
        <strain>C57BL/6J</strain>
    </source>
</reference>
<reference key="5">
    <citation type="journal article" date="2004" name="Genome Res.">
        <title>The status, quality, and expansion of the NIH full-length cDNA project: the Mammalian Gene Collection (MGC).</title>
        <authorList>
            <consortium name="The MGC Project Team"/>
        </authorList>
    </citation>
    <scope>NUCLEOTIDE SEQUENCE [LARGE SCALE MRNA]</scope>
    <source>
        <tissue>Testis</tissue>
    </source>
</reference>
<reference key="6">
    <citation type="journal article" date="2003" name="Dev. Dyn.">
        <title>Alternative promoters and polyadenylation regulate tissue-specific expression of Hemogen isoforms during hematopoiesis and spermatogenesis.</title>
        <authorList>
            <person name="Yang L.V."/>
            <person name="Heng H.H."/>
            <person name="Wan J."/>
            <person name="Southwood C.M."/>
            <person name="Gow A."/>
            <person name="Li L."/>
        </authorList>
    </citation>
    <scope>TISSUE SPECIFICITY</scope>
    <scope>DEVELOPMENTAL STAGE</scope>
</reference>
<reference key="7">
    <citation type="journal article" date="2010" name="Cell">
        <title>A tissue-specific atlas of mouse protein phosphorylation and expression.</title>
        <authorList>
            <person name="Huttlin E.L."/>
            <person name="Jedrychowski M.P."/>
            <person name="Elias J.E."/>
            <person name="Goswami T."/>
            <person name="Rad R."/>
            <person name="Beausoleil S.A."/>
            <person name="Villen J."/>
            <person name="Haas W."/>
            <person name="Sowa M.E."/>
            <person name="Gygi S.P."/>
        </authorList>
    </citation>
    <scope>PHOSPHORYLATION [LARGE SCALE ANALYSIS] AT SER-103; SER-153; SER-158; SER-171; SER-213; SER-223; SER-241; SER-269; THR-286 AND SER-387</scope>
    <scope>IDENTIFICATION BY MASS SPECTROMETRY [LARGE SCALE ANALYSIS]</scope>
    <source>
        <tissue>Lung</tissue>
        <tissue>Spleen</tissue>
    </source>
</reference>
<organism>
    <name type="scientific">Mus musculus</name>
    <name type="common">Mouse</name>
    <dbReference type="NCBI Taxonomy" id="10090"/>
    <lineage>
        <taxon>Eukaryota</taxon>
        <taxon>Metazoa</taxon>
        <taxon>Chordata</taxon>
        <taxon>Craniata</taxon>
        <taxon>Vertebrata</taxon>
        <taxon>Euteleostomi</taxon>
        <taxon>Mammalia</taxon>
        <taxon>Eutheria</taxon>
        <taxon>Euarchontoglires</taxon>
        <taxon>Glires</taxon>
        <taxon>Rodentia</taxon>
        <taxon>Myomorpha</taxon>
        <taxon>Muroidea</taxon>
        <taxon>Muridae</taxon>
        <taxon>Murinae</taxon>
        <taxon>Mus</taxon>
        <taxon>Mus</taxon>
    </lineage>
</organism>
<gene>
    <name type="primary">Hemgn</name>
    <name type="synonym">Ndr</name>
</gene>
<evidence type="ECO:0000250" key="1"/>
<evidence type="ECO:0000250" key="2">
    <source>
        <dbReference type="UniProtKB" id="Q6AZ54"/>
    </source>
</evidence>
<evidence type="ECO:0000250" key="3">
    <source>
        <dbReference type="UniProtKB" id="Q9BXL5"/>
    </source>
</evidence>
<evidence type="ECO:0000256" key="4">
    <source>
        <dbReference type="SAM" id="MobiDB-lite"/>
    </source>
</evidence>
<evidence type="ECO:0000269" key="5">
    <source>
    </source>
</evidence>
<evidence type="ECO:0000269" key="6">
    <source>
    </source>
</evidence>
<evidence type="ECO:0000305" key="7"/>
<evidence type="ECO:0007744" key="8">
    <source>
    </source>
</evidence>
<protein>
    <recommendedName>
        <fullName>Hemogen</fullName>
    </recommendedName>
    <alternativeName>
        <fullName>Hemopoietic gene protein</fullName>
    </alternativeName>
    <alternativeName>
        <fullName>Negative differentiation regulator protein</fullName>
        <shortName>mNDR</shortName>
    </alternativeName>
</protein>
<sequence>MDMGKGRPRLKLPQMPEAHPQKSCAPDIIGSWSLRNREQLRKRKAEAQGRQTSQWLLGEQKKRKYQRTGKGNKRGRKRQGNVEQKAEPWSQTERERVQEVLVSAEEETEHPGNSATEALPLVPSPTKAVPADQCSEAHQESIQCQERAIQNHSQTHLSPTTCQGIAVLQHSPKMCQDMAEPEVFSPNMCQETAVPQTYPPKALEEMAAAEPLSPKMCQETTVSPNHSSKVPQDMAGPEALSPNMCQEPTVPQEHTLKMCHDVARPEVLSPKTHQEMAVPKAFPCVTPGDAAGLEGCAPKALPQSDVAEGCPLDTTPTSVTPEQTTSDPDLGMAVTEGFFSEARECTVSEGVSTKTHQEAVEPEFISHETYKEFTVPIVSSQKTIQESPEPEQYSPETCQPIPGPENYSLETCHEMSGPEDLSIKTCQDREEPKHSLPEGAQKVGGAQGQDADAQDSENAGAFSQDFTEMEEENKADQDPEAPASPQGSQETCPENGIYSSALF</sequence>